<accession>Q47084</accession>
<accession>E0SIF6</accession>
<reference key="1">
    <citation type="journal article" date="1995" name="Mol. Microbiol.">
        <title>Differential expression of two siderophore-dependent iron-acquisition pathways in Erwinia chrysanthemi 3937: characterization of a novel ferrisiderophore permease of the ABC transporter family.</title>
        <authorList>
            <person name="Mahe B."/>
            <person name="Masclaux C."/>
            <person name="Rauscher L."/>
            <person name="Enard C."/>
            <person name="Expert D."/>
        </authorList>
    </citation>
    <scope>NUCLEOTIDE SEQUENCE [GENOMIC DNA]</scope>
    <source>
        <strain>3937</strain>
    </source>
</reference>
<reference key="2">
    <citation type="journal article" date="2011" name="J. Bacteriol.">
        <title>Genome sequence of the plant-pathogenic bacterium Dickeya dadantii 3937.</title>
        <authorList>
            <person name="Glasner J.D."/>
            <person name="Yang C.H."/>
            <person name="Reverchon S."/>
            <person name="Hugouvieux-Cotte-Pattat N."/>
            <person name="Condemine G."/>
            <person name="Bohin J.P."/>
            <person name="Van Gijsegem F."/>
            <person name="Yang S."/>
            <person name="Franza T."/>
            <person name="Expert D."/>
            <person name="Plunkett G. III"/>
            <person name="San Francisco M.J."/>
            <person name="Charkowski A.O."/>
            <person name="Py B."/>
            <person name="Bell K."/>
            <person name="Rauscher L."/>
            <person name="Rodriguez-Palenzuela P."/>
            <person name="Toussaint A."/>
            <person name="Holeva M.C."/>
            <person name="He S.Y."/>
            <person name="Douet V."/>
            <person name="Boccara M."/>
            <person name="Blanco C."/>
            <person name="Toth I."/>
            <person name="Anderson B.D."/>
            <person name="Biehl B.S."/>
            <person name="Mau B."/>
            <person name="Flynn S.M."/>
            <person name="Barras F."/>
            <person name="Lindeberg M."/>
            <person name="Birch P.R."/>
            <person name="Tsuyumu S."/>
            <person name="Shi X."/>
            <person name="Hibbing M."/>
            <person name="Yap M.N."/>
            <person name="Carpentier M."/>
            <person name="Dassa E."/>
            <person name="Umehara M."/>
            <person name="Kim J.F."/>
            <person name="Rusch M."/>
            <person name="Soni P."/>
            <person name="Mayhew G.F."/>
            <person name="Fouts D.E."/>
            <person name="Gill S.R."/>
            <person name="Blattner F.R."/>
            <person name="Keen N.T."/>
            <person name="Perna N.T."/>
        </authorList>
    </citation>
    <scope>NUCLEOTIDE SEQUENCE [LARGE SCALE GENOMIC DNA]</scope>
    <source>
        <strain>3937</strain>
    </source>
</reference>
<evidence type="ECO:0000255" key="1"/>
<evidence type="ECO:0000255" key="2">
    <source>
        <dbReference type="PROSITE-ProRule" id="PRU00344"/>
    </source>
</evidence>
<evidence type="ECO:0000305" key="3"/>
<comment type="function">
    <text>Binds citrate- or chloride-dependent Fe(3+); part of the binding-protein-dependent transport system CbrABCD for uptake of the siderophore achromobactin.</text>
</comment>
<comment type="subcellular location">
    <subcellularLocation>
        <location>Periplasm</location>
    </subcellularLocation>
</comment>
<comment type="similarity">
    <text evidence="3">Belongs to the bacterial solute-binding protein 8 family.</text>
</comment>
<gene>
    <name type="primary">cbrA</name>
    <name type="ordered locus">Dda3937_02848</name>
</gene>
<organism>
    <name type="scientific">Dickeya dadantii (strain 3937)</name>
    <name type="common">Erwinia chrysanthemi (strain 3937)</name>
    <dbReference type="NCBI Taxonomy" id="198628"/>
    <lineage>
        <taxon>Bacteria</taxon>
        <taxon>Pseudomonadati</taxon>
        <taxon>Pseudomonadota</taxon>
        <taxon>Gammaproteobacteria</taxon>
        <taxon>Enterobacterales</taxon>
        <taxon>Pectobacteriaceae</taxon>
        <taxon>Dickeya</taxon>
    </lineage>
</organism>
<keyword id="KW-0406">Ion transport</keyword>
<keyword id="KW-0408">Iron</keyword>
<keyword id="KW-0410">Iron transport</keyword>
<keyword id="KW-0574">Periplasm</keyword>
<keyword id="KW-1185">Reference proteome</keyword>
<keyword id="KW-0732">Signal</keyword>
<keyword id="KW-0813">Transport</keyword>
<protein>
    <recommendedName>
        <fullName>Achromobactin-binding periplasmic protein</fullName>
    </recommendedName>
</protein>
<name>CBRA_DICD3</name>
<feature type="signal peptide" evidence="1">
    <location>
        <begin position="1"/>
        <end position="29"/>
    </location>
</feature>
<feature type="chain" id="PRO_0000031818" description="Achromobactin-binding periplasmic protein">
    <location>
        <begin position="30"/>
        <end position="305"/>
    </location>
</feature>
<feature type="domain" description="Fe/B12 periplasmic-binding" evidence="2">
    <location>
        <begin position="37"/>
        <end position="302"/>
    </location>
</feature>
<dbReference type="EMBL" id="X87208">
    <property type="protein sequence ID" value="CAA60666.1"/>
    <property type="molecule type" value="Genomic_DNA"/>
</dbReference>
<dbReference type="EMBL" id="CP002038">
    <property type="protein sequence ID" value="ADM97837.1"/>
    <property type="molecule type" value="Genomic_DNA"/>
</dbReference>
<dbReference type="PIR" id="S54820">
    <property type="entry name" value="S54820"/>
</dbReference>
<dbReference type="RefSeq" id="WP_013317298.1">
    <property type="nucleotide sequence ID" value="NC_014500.1"/>
</dbReference>
<dbReference type="SMR" id="Q47084"/>
<dbReference type="STRING" id="198628.Dda3937_02848"/>
<dbReference type="TCDB" id="3.A.1.14.4">
    <property type="family name" value="the atp-binding cassette (abc) superfamily"/>
</dbReference>
<dbReference type="KEGG" id="ddd:Dda3937_02848"/>
<dbReference type="PATRIC" id="fig|198628.6.peg.1626"/>
<dbReference type="eggNOG" id="COG0614">
    <property type="taxonomic scope" value="Bacteria"/>
</dbReference>
<dbReference type="HOGENOM" id="CLU_038034_0_2_6"/>
<dbReference type="OrthoDB" id="9793175at2"/>
<dbReference type="Proteomes" id="UP000006859">
    <property type="component" value="Chromosome"/>
</dbReference>
<dbReference type="GO" id="GO:0030288">
    <property type="term" value="C:outer membrane-bounded periplasmic space"/>
    <property type="evidence" value="ECO:0007669"/>
    <property type="project" value="TreeGrafter"/>
</dbReference>
<dbReference type="GO" id="GO:0042935">
    <property type="term" value="P:achromobactin transport"/>
    <property type="evidence" value="ECO:0000315"/>
    <property type="project" value="ASAP"/>
</dbReference>
<dbReference type="GO" id="GO:0042858">
    <property type="term" value="P:chrysobactin biosynthetic process"/>
    <property type="evidence" value="ECO:0000315"/>
    <property type="project" value="ASAP"/>
</dbReference>
<dbReference type="CDD" id="cd01146">
    <property type="entry name" value="FhuD"/>
    <property type="match status" value="1"/>
</dbReference>
<dbReference type="Gene3D" id="3.40.50.1980">
    <property type="entry name" value="Nitrogenase molybdenum iron protein domain"/>
    <property type="match status" value="2"/>
</dbReference>
<dbReference type="InterPro" id="IPR002491">
    <property type="entry name" value="ABC_transptr_periplasmic_BD"/>
</dbReference>
<dbReference type="InterPro" id="IPR051313">
    <property type="entry name" value="Bact_iron-sidero_bind"/>
</dbReference>
<dbReference type="PANTHER" id="PTHR30532">
    <property type="entry name" value="IRON III DICITRATE-BINDING PERIPLASMIC PROTEIN"/>
    <property type="match status" value="1"/>
</dbReference>
<dbReference type="PANTHER" id="PTHR30532:SF21">
    <property type="entry name" value="SIDEROPHORE-BINDING LIPOPROTEIN YFIY-RELATED"/>
    <property type="match status" value="1"/>
</dbReference>
<dbReference type="Pfam" id="PF01497">
    <property type="entry name" value="Peripla_BP_2"/>
    <property type="match status" value="1"/>
</dbReference>
<dbReference type="SUPFAM" id="SSF53807">
    <property type="entry name" value="Helical backbone' metal receptor"/>
    <property type="match status" value="1"/>
</dbReference>
<dbReference type="PROSITE" id="PS50983">
    <property type="entry name" value="FE_B12_PBP"/>
    <property type="match status" value="1"/>
</dbReference>
<proteinExistence type="inferred from homology"/>
<sequence length="305" mass="34011">MNEYLVSRRRLLRLSLSLLPLGLGRPALAQSLFMPQRVITLFQGATDTAVALGITPAGVVDSWSEKPMYRYLRQALAGVPHVGLETQPSLEDIVLLKPDAIVASRFRHQRLEPLLSQIAPVVMLDEIYQFKKTVQVMGQALQRQAVADQLLQNWQLRVNGLREQLQRKFGGDWPPTVSILDIREDHIRSYLPGSFPGSVLSELGFGWSDASRAQPGVSLKLTNKESIPVVDADIFFIFLRSESPSVQRNYESLIRHPLWQQLRAPRRNQVWVVNGVTWSLSGGILGANMMLDDIARVTGIAGGVS</sequence>